<evidence type="ECO:0000250" key="1"/>
<evidence type="ECO:0000250" key="2">
    <source>
        <dbReference type="UniProtKB" id="P62894"/>
    </source>
</evidence>
<evidence type="ECO:0000250" key="3">
    <source>
        <dbReference type="UniProtKB" id="P62897"/>
    </source>
</evidence>
<evidence type="ECO:0000305" key="4"/>
<reference key="1">
    <citation type="journal article" date="1971" name="FEBS Lett.">
        <title>Of the primary structure of cytochromes c of Plains zebra (Equus quagga boehmi).</title>
        <authorList>
            <person name="Guertler L."/>
            <person name="Horstmann H.J."/>
        </authorList>
    </citation>
    <scope>AMINO-ACID COMPOSITION</scope>
    <scope>PROTEIN SEQUENCE OF 41-49</scope>
    <source>
        <tissue>Heart</tissue>
    </source>
</reference>
<proteinExistence type="evidence at protein level"/>
<accession>P68096</accession>
<accession>P00005</accession>
<gene>
    <name type="primary">CYCS</name>
    <name type="synonym">CYC</name>
</gene>
<keyword id="KW-0007">Acetylation</keyword>
<keyword id="KW-0053">Apoptosis</keyword>
<keyword id="KW-0903">Direct protein sequencing</keyword>
<keyword id="KW-0249">Electron transport</keyword>
<keyword id="KW-0349">Heme</keyword>
<keyword id="KW-0408">Iron</keyword>
<keyword id="KW-0479">Metal-binding</keyword>
<keyword id="KW-0496">Mitochondrion</keyword>
<keyword id="KW-0597">Phosphoprotein</keyword>
<keyword id="KW-0679">Respiratory chain</keyword>
<keyword id="KW-0813">Transport</keyword>
<dbReference type="PIR" id="A91330">
    <property type="entry name" value="CCHOZ"/>
</dbReference>
<dbReference type="BMRB" id="P68096"/>
<dbReference type="SMR" id="P68096"/>
<dbReference type="GO" id="GO:0005758">
    <property type="term" value="C:mitochondrial intermembrane space"/>
    <property type="evidence" value="ECO:0007669"/>
    <property type="project" value="UniProtKB-SubCell"/>
</dbReference>
<dbReference type="GO" id="GO:0009055">
    <property type="term" value="F:electron transfer activity"/>
    <property type="evidence" value="ECO:0007669"/>
    <property type="project" value="InterPro"/>
</dbReference>
<dbReference type="GO" id="GO:0020037">
    <property type="term" value="F:heme binding"/>
    <property type="evidence" value="ECO:0007669"/>
    <property type="project" value="InterPro"/>
</dbReference>
<dbReference type="GO" id="GO:0046872">
    <property type="term" value="F:metal ion binding"/>
    <property type="evidence" value="ECO:0007669"/>
    <property type="project" value="UniProtKB-KW"/>
</dbReference>
<dbReference type="GO" id="GO:0006915">
    <property type="term" value="P:apoptotic process"/>
    <property type="evidence" value="ECO:0007669"/>
    <property type="project" value="UniProtKB-KW"/>
</dbReference>
<dbReference type="FunFam" id="1.10.760.10:FF:000008">
    <property type="entry name" value="Cytochrome c"/>
    <property type="match status" value="1"/>
</dbReference>
<dbReference type="Gene3D" id="1.10.760.10">
    <property type="entry name" value="Cytochrome c-like domain"/>
    <property type="match status" value="1"/>
</dbReference>
<dbReference type="InterPro" id="IPR009056">
    <property type="entry name" value="Cyt_c-like_dom"/>
</dbReference>
<dbReference type="InterPro" id="IPR036909">
    <property type="entry name" value="Cyt_c-like_dom_sf"/>
</dbReference>
<dbReference type="InterPro" id="IPR002327">
    <property type="entry name" value="Cyt_c_1A/1B"/>
</dbReference>
<dbReference type="PANTHER" id="PTHR11961">
    <property type="entry name" value="CYTOCHROME C"/>
    <property type="match status" value="1"/>
</dbReference>
<dbReference type="Pfam" id="PF00034">
    <property type="entry name" value="Cytochrom_C"/>
    <property type="match status" value="1"/>
</dbReference>
<dbReference type="PRINTS" id="PR00604">
    <property type="entry name" value="CYTCHRMECIAB"/>
</dbReference>
<dbReference type="SUPFAM" id="SSF46626">
    <property type="entry name" value="Cytochrome c"/>
    <property type="match status" value="1"/>
</dbReference>
<dbReference type="PROSITE" id="PS51007">
    <property type="entry name" value="CYTC"/>
    <property type="match status" value="1"/>
</dbReference>
<organism>
    <name type="scientific">Equus quagga burchellii</name>
    <name type="common">Burchell's zebra</name>
    <name type="synonym">Equus burchelli</name>
    <dbReference type="NCBI Taxonomy" id="89252"/>
    <lineage>
        <taxon>Eukaryota</taxon>
        <taxon>Metazoa</taxon>
        <taxon>Chordata</taxon>
        <taxon>Craniata</taxon>
        <taxon>Vertebrata</taxon>
        <taxon>Euteleostomi</taxon>
        <taxon>Mammalia</taxon>
        <taxon>Eutheria</taxon>
        <taxon>Laurasiatheria</taxon>
        <taxon>Perissodactyla</taxon>
        <taxon>Equidae</taxon>
        <taxon>Equus</taxon>
        <taxon>Equus quagga</taxon>
    </lineage>
</organism>
<protein>
    <recommendedName>
        <fullName>Cytochrome c</fullName>
    </recommendedName>
</protein>
<name>CYC_EQUQB</name>
<sequence>MGDVEKGKKIFVQKCAQCHTVEKGGKHKTGPNLHGLFGRKTGQAPGFSYTDANKNKGITWKEETLMEYLENPKKYIPGTKMIFAGIKKKTEREDLIAYLKKATNE</sequence>
<feature type="initiator methionine" description="Removed" evidence="2">
    <location>
        <position position="1"/>
    </location>
</feature>
<feature type="chain" id="PRO_0000108213" description="Cytochrome c">
    <location>
        <begin position="2"/>
        <end position="105"/>
    </location>
</feature>
<feature type="binding site" description="covalent">
    <location>
        <position position="15"/>
    </location>
    <ligand>
        <name>heme c</name>
        <dbReference type="ChEBI" id="CHEBI:61717"/>
    </ligand>
</feature>
<feature type="binding site" description="covalent">
    <location>
        <position position="18"/>
    </location>
    <ligand>
        <name>heme c</name>
        <dbReference type="ChEBI" id="CHEBI:61717"/>
    </ligand>
</feature>
<feature type="binding site" description="axial binding residue">
    <location>
        <position position="19"/>
    </location>
    <ligand>
        <name>heme c</name>
        <dbReference type="ChEBI" id="CHEBI:61717"/>
    </ligand>
    <ligandPart>
        <name>Fe</name>
        <dbReference type="ChEBI" id="CHEBI:18248"/>
    </ligandPart>
</feature>
<feature type="binding site" description="axial binding residue">
    <location>
        <position position="81"/>
    </location>
    <ligand>
        <name>heme c</name>
        <dbReference type="ChEBI" id="CHEBI:61717"/>
    </ligand>
    <ligandPart>
        <name>Fe</name>
        <dbReference type="ChEBI" id="CHEBI:18248"/>
    </ligandPart>
</feature>
<feature type="modified residue" description="N-acetylglycine" evidence="2">
    <location>
        <position position="2"/>
    </location>
</feature>
<feature type="modified residue" description="Phosphotyrosine" evidence="2">
    <location>
        <position position="49"/>
    </location>
</feature>
<feature type="modified residue" description="N6-succinyllysine" evidence="3">
    <location>
        <position position="56"/>
    </location>
</feature>
<feature type="modified residue" description="N6-acetyllysine; alternate" evidence="3">
    <location>
        <position position="73"/>
    </location>
</feature>
<feature type="modified residue" description="N6-succinyllysine; alternate" evidence="3">
    <location>
        <position position="73"/>
    </location>
</feature>
<feature type="modified residue" description="Phosphotyrosine" evidence="2">
    <location>
        <position position="98"/>
    </location>
</feature>
<feature type="modified residue" description="N6-acetyllysine" evidence="3">
    <location>
        <position position="100"/>
    </location>
</feature>
<comment type="function">
    <text>Electron carrier protein. The oxidized form of the cytochrome c heme group can accept an electron from the heme group of the cytochrome c1 subunit of cytochrome reductase. Cytochrome c then transfers this electron to the cytochrome oxidase complex, the final protein carrier in the mitochondrial electron-transport chain.</text>
</comment>
<comment type="function">
    <text evidence="1">Plays a role in apoptosis. Suppression of the anti-apoptotic members or activation of the pro-apoptotic members of the Bcl-2 family leads to altered mitochondrial membrane permeability resulting in release of cytochrome c into the cytosol. Binding of cytochrome c to Apaf-1 triggers the activation of caspase-9, which then accelerates apoptosis by activating other caspases (By similarity).</text>
</comment>
<comment type="subcellular location">
    <subcellularLocation>
        <location>Mitochondrion intermembrane space</location>
    </subcellularLocation>
    <text>Loosely associated with the inner membrane.</text>
</comment>
<comment type="PTM">
    <text>Binds 1 heme c group covalently per subunit.</text>
</comment>
<comment type="PTM">
    <text evidence="1">Phosphorylation at Tyr-49 and Tyr-98 both reduce by half the turnover in the reaction with cytochrome c oxidase, down-regulating mitochondrial respiration.</text>
</comment>
<comment type="miscellaneous">
    <text>Mules and hinnies are heterozygous, having equal amount of horse and donkey cytochromes c.</text>
</comment>
<comment type="similarity">
    <text evidence="4">Belongs to the cytochrome c family.</text>
</comment>
<comment type="online information" name="Protein Spotlight">
    <link uri="https://www.proteinspotlight.org/back_issues/076"/>
    <text>Life shuttle - Issue 76 of November 2006</text>
</comment>